<sequence length="745" mass="84022">MITSLSQISFGTLRRFGSSVLPSALKREFVEGLRTLVRSGDIRRAVSLFYSAPVELQSQQAYAALFQACAEQRNLLDGINLHHHMLSHPYCYSQNVILANFLINMYAKCGNILYARQVFDTMPERNVVSWTALITGYVQAGNEQEGFCLFSSMLSHCFPNEFTLSSVLTSCRYEPGKQVHGLALKLGLHCSIYVANAVISMYGRCHDGAAAYEAWTVFEAIKFKNLVTWNSMIAAFQCCNLGKKAIGVFMRMHSDGVGFDRATLLNICSSLYKSSDLVPNEVSKCCLQLHSLTVKSGLVTQTEVATALIKVYSEMLEDYTDCYKLFMEMSHCRDIVAWNGIITAFAVYDPERAIHLFGQLRQEKLSPDWYTFSSVLKACAGLVTARHALSIHAQVIKGGFLADTVLNNSLIHAYAKCGSLDLCMRVFDDMDSRDVVSWNSMLKAYSLHGQVDSILPVFQKMDINPDSATFIALLSACSHAGRVEEGLRIFRSMFEKPETLPQLNHYACVIDMLSRAERFAEAEEVIKQMPMDPDAVVWIALLGSCRKHGNTRLGKLAADKLKELVEPTNSMSYIQMSNIYNAEGSFNEANLSIKEMETWRVRKEPDLSWTEIGNKVHEFASGGRHRPDKEAVYRELKRLISWLKEMGYVPEMRSASQDIEDEEQEEDNLLHHSEKLALAFAVMEGRKSSDCGVNLIQIMKNTRICIDCHNFMKLASKLLGKEILMRDSNRFHHFKDSSCSCNDYW</sequence>
<dbReference type="EMBL" id="AC016163">
    <property type="protein sequence ID" value="AAG51830.1"/>
    <property type="molecule type" value="Genomic_DNA"/>
</dbReference>
<dbReference type="EMBL" id="CP002684">
    <property type="protein sequence ID" value="AEE35199.1"/>
    <property type="molecule type" value="Genomic_DNA"/>
</dbReference>
<dbReference type="EMBL" id="AK230400">
    <property type="protein sequence ID" value="BAF02198.1"/>
    <property type="molecule type" value="mRNA"/>
</dbReference>
<dbReference type="RefSeq" id="NP_177298.1">
    <property type="nucleotide sequence ID" value="NM_105811.3"/>
</dbReference>
<dbReference type="SMR" id="Q9C9H9"/>
<dbReference type="FunCoup" id="Q9C9H9">
    <property type="interactions" value="232"/>
</dbReference>
<dbReference type="PaxDb" id="3702-AT1G71420.1"/>
<dbReference type="ProteomicsDB" id="249062"/>
<dbReference type="EnsemblPlants" id="AT1G71420.1">
    <property type="protein sequence ID" value="AT1G71420.1"/>
    <property type="gene ID" value="AT1G71420"/>
</dbReference>
<dbReference type="GeneID" id="843483"/>
<dbReference type="Gramene" id="AT1G71420.1">
    <property type="protein sequence ID" value="AT1G71420.1"/>
    <property type="gene ID" value="AT1G71420"/>
</dbReference>
<dbReference type="KEGG" id="ath:AT1G71420"/>
<dbReference type="Araport" id="AT1G71420"/>
<dbReference type="TAIR" id="AT1G71420"/>
<dbReference type="eggNOG" id="KOG4197">
    <property type="taxonomic scope" value="Eukaryota"/>
</dbReference>
<dbReference type="HOGENOM" id="CLU_002706_15_1_1"/>
<dbReference type="InParanoid" id="Q9C9H9"/>
<dbReference type="OMA" id="HAYSRCG"/>
<dbReference type="PhylomeDB" id="Q9C9H9"/>
<dbReference type="PRO" id="PR:Q9C9H9"/>
<dbReference type="Proteomes" id="UP000006548">
    <property type="component" value="Chromosome 1"/>
</dbReference>
<dbReference type="ExpressionAtlas" id="Q9C9H9">
    <property type="expression patterns" value="baseline and differential"/>
</dbReference>
<dbReference type="GO" id="GO:0003723">
    <property type="term" value="F:RNA binding"/>
    <property type="evidence" value="ECO:0007669"/>
    <property type="project" value="InterPro"/>
</dbReference>
<dbReference type="GO" id="GO:0008270">
    <property type="term" value="F:zinc ion binding"/>
    <property type="evidence" value="ECO:0007669"/>
    <property type="project" value="InterPro"/>
</dbReference>
<dbReference type="GO" id="GO:0009451">
    <property type="term" value="P:RNA modification"/>
    <property type="evidence" value="ECO:0007669"/>
    <property type="project" value="InterPro"/>
</dbReference>
<dbReference type="FunFam" id="1.25.40.10:FF:000381">
    <property type="entry name" value="Pentatricopeptide repeat-containing protein"/>
    <property type="match status" value="1"/>
</dbReference>
<dbReference type="FunFam" id="1.25.40.10:FF:002604">
    <property type="entry name" value="Pentatricopeptide repeat-containing protein At1g71420"/>
    <property type="match status" value="1"/>
</dbReference>
<dbReference type="FunFam" id="1.25.40.10:FF:001093">
    <property type="entry name" value="Pentatricopeptide repeat-containing protein At2g34400"/>
    <property type="match status" value="1"/>
</dbReference>
<dbReference type="FunFam" id="1.25.40.10:FF:002156">
    <property type="entry name" value="Putative pentatricopeptide repeat-containing protein At1g56570"/>
    <property type="match status" value="1"/>
</dbReference>
<dbReference type="Gene3D" id="1.25.40.10">
    <property type="entry name" value="Tetratricopeptide repeat domain"/>
    <property type="match status" value="5"/>
</dbReference>
<dbReference type="InterPro" id="IPR032867">
    <property type="entry name" value="DYW_dom"/>
</dbReference>
<dbReference type="InterPro" id="IPR046848">
    <property type="entry name" value="E_motif"/>
</dbReference>
<dbReference type="InterPro" id="IPR002885">
    <property type="entry name" value="Pentatricopeptide_rpt"/>
</dbReference>
<dbReference type="InterPro" id="IPR046960">
    <property type="entry name" value="PPR_At4g14850-like_plant"/>
</dbReference>
<dbReference type="InterPro" id="IPR011990">
    <property type="entry name" value="TPR-like_helical_dom_sf"/>
</dbReference>
<dbReference type="NCBIfam" id="TIGR00756">
    <property type="entry name" value="PPR"/>
    <property type="match status" value="3"/>
</dbReference>
<dbReference type="PANTHER" id="PTHR47926:SF382">
    <property type="entry name" value="PENTACOTRIPEPTIDE-REPEAT REGION OF PRORP DOMAIN-CONTAINING PROTEIN"/>
    <property type="match status" value="1"/>
</dbReference>
<dbReference type="PANTHER" id="PTHR47926">
    <property type="entry name" value="PENTATRICOPEPTIDE REPEAT-CONTAINING PROTEIN"/>
    <property type="match status" value="1"/>
</dbReference>
<dbReference type="Pfam" id="PF14432">
    <property type="entry name" value="DYW_deaminase"/>
    <property type="match status" value="1"/>
</dbReference>
<dbReference type="Pfam" id="PF20431">
    <property type="entry name" value="E_motif"/>
    <property type="match status" value="1"/>
</dbReference>
<dbReference type="Pfam" id="PF01535">
    <property type="entry name" value="PPR"/>
    <property type="match status" value="5"/>
</dbReference>
<dbReference type="Pfam" id="PF13041">
    <property type="entry name" value="PPR_2"/>
    <property type="match status" value="1"/>
</dbReference>
<dbReference type="Pfam" id="PF13812">
    <property type="entry name" value="PPR_3"/>
    <property type="match status" value="1"/>
</dbReference>
<dbReference type="PROSITE" id="PS51375">
    <property type="entry name" value="PPR"/>
    <property type="match status" value="12"/>
</dbReference>
<organism>
    <name type="scientific">Arabidopsis thaliana</name>
    <name type="common">Mouse-ear cress</name>
    <dbReference type="NCBI Taxonomy" id="3702"/>
    <lineage>
        <taxon>Eukaryota</taxon>
        <taxon>Viridiplantae</taxon>
        <taxon>Streptophyta</taxon>
        <taxon>Embryophyta</taxon>
        <taxon>Tracheophyta</taxon>
        <taxon>Spermatophyta</taxon>
        <taxon>Magnoliopsida</taxon>
        <taxon>eudicotyledons</taxon>
        <taxon>Gunneridae</taxon>
        <taxon>Pentapetalae</taxon>
        <taxon>rosids</taxon>
        <taxon>malvids</taxon>
        <taxon>Brassicales</taxon>
        <taxon>Brassicaceae</taxon>
        <taxon>Camelineae</taxon>
        <taxon>Arabidopsis</taxon>
    </lineage>
</organism>
<evidence type="ECO:0000305" key="1"/>
<feature type="chain" id="PRO_0000342855" description="Pentatricopeptide repeat-containing protein At1g71420">
    <location>
        <begin position="1"/>
        <end position="745"/>
    </location>
</feature>
<feature type="repeat" description="PPR 1">
    <location>
        <begin position="58"/>
        <end position="88"/>
    </location>
</feature>
<feature type="repeat" description="PPR 2">
    <location>
        <begin position="95"/>
        <end position="125"/>
    </location>
</feature>
<feature type="repeat" description="PPR 3">
    <location>
        <begin position="126"/>
        <end position="160"/>
    </location>
</feature>
<feature type="repeat" description="PPR 4">
    <location>
        <begin position="191"/>
        <end position="224"/>
    </location>
</feature>
<feature type="repeat" description="PPR 5">
    <location>
        <begin position="225"/>
        <end position="259"/>
    </location>
</feature>
<feature type="repeat" description="PPR 6">
    <location>
        <begin position="260"/>
        <end position="296"/>
    </location>
</feature>
<feature type="repeat" description="PPR 7">
    <location>
        <begin position="301"/>
        <end position="332"/>
    </location>
</feature>
<feature type="repeat" description="PPR 8">
    <location>
        <begin position="334"/>
        <end position="367"/>
    </location>
</feature>
<feature type="repeat" description="PPR 9">
    <location>
        <begin position="368"/>
        <end position="402"/>
    </location>
</feature>
<feature type="repeat" description="PPR 10">
    <location>
        <begin position="403"/>
        <end position="437"/>
    </location>
</feature>
<feature type="repeat" description="PPR 11">
    <location>
        <begin position="438"/>
        <end position="464"/>
    </location>
</feature>
<feature type="repeat" description="PPR 12">
    <location>
        <begin position="466"/>
        <end position="496"/>
    </location>
</feature>
<feature type="repeat" description="PPR 13">
    <location>
        <begin position="502"/>
        <end position="532"/>
    </location>
</feature>
<feature type="region of interest" description="Type E motif">
    <location>
        <begin position="537"/>
        <end position="613"/>
    </location>
</feature>
<feature type="region of interest" description="Type E(+) motif">
    <location>
        <begin position="614"/>
        <end position="644"/>
    </location>
</feature>
<feature type="region of interest" description="Type DYW motif">
    <location>
        <begin position="645"/>
        <end position="745"/>
    </location>
</feature>
<comment type="similarity">
    <text evidence="1">Belongs to the PPR family. PCMP-H subfamily.</text>
</comment>
<comment type="online information" name="Pentatricopeptide repeat proteins">
    <link uri="https://ppr.plantenergy.uwa.edu.au"/>
</comment>
<reference key="1">
    <citation type="journal article" date="2000" name="Nature">
        <title>Sequence and analysis of chromosome 1 of the plant Arabidopsis thaliana.</title>
        <authorList>
            <person name="Theologis A."/>
            <person name="Ecker J.R."/>
            <person name="Palm C.J."/>
            <person name="Federspiel N.A."/>
            <person name="Kaul S."/>
            <person name="White O."/>
            <person name="Alonso J."/>
            <person name="Altafi H."/>
            <person name="Araujo R."/>
            <person name="Bowman C.L."/>
            <person name="Brooks S.Y."/>
            <person name="Buehler E."/>
            <person name="Chan A."/>
            <person name="Chao Q."/>
            <person name="Chen H."/>
            <person name="Cheuk R.F."/>
            <person name="Chin C.W."/>
            <person name="Chung M.K."/>
            <person name="Conn L."/>
            <person name="Conway A.B."/>
            <person name="Conway A.R."/>
            <person name="Creasy T.H."/>
            <person name="Dewar K."/>
            <person name="Dunn P."/>
            <person name="Etgu P."/>
            <person name="Feldblyum T.V."/>
            <person name="Feng J.-D."/>
            <person name="Fong B."/>
            <person name="Fujii C.Y."/>
            <person name="Gill J.E."/>
            <person name="Goldsmith A.D."/>
            <person name="Haas B."/>
            <person name="Hansen N.F."/>
            <person name="Hughes B."/>
            <person name="Huizar L."/>
            <person name="Hunter J.L."/>
            <person name="Jenkins J."/>
            <person name="Johnson-Hopson C."/>
            <person name="Khan S."/>
            <person name="Khaykin E."/>
            <person name="Kim C.J."/>
            <person name="Koo H.L."/>
            <person name="Kremenetskaia I."/>
            <person name="Kurtz D.B."/>
            <person name="Kwan A."/>
            <person name="Lam B."/>
            <person name="Langin-Hooper S."/>
            <person name="Lee A."/>
            <person name="Lee J.M."/>
            <person name="Lenz C.A."/>
            <person name="Li J.H."/>
            <person name="Li Y.-P."/>
            <person name="Lin X."/>
            <person name="Liu S.X."/>
            <person name="Liu Z.A."/>
            <person name="Luros J.S."/>
            <person name="Maiti R."/>
            <person name="Marziali A."/>
            <person name="Militscher J."/>
            <person name="Miranda M."/>
            <person name="Nguyen M."/>
            <person name="Nierman W.C."/>
            <person name="Osborne B.I."/>
            <person name="Pai G."/>
            <person name="Peterson J."/>
            <person name="Pham P.K."/>
            <person name="Rizzo M."/>
            <person name="Rooney T."/>
            <person name="Rowley D."/>
            <person name="Sakano H."/>
            <person name="Salzberg S.L."/>
            <person name="Schwartz J.R."/>
            <person name="Shinn P."/>
            <person name="Southwick A.M."/>
            <person name="Sun H."/>
            <person name="Tallon L.J."/>
            <person name="Tambunga G."/>
            <person name="Toriumi M.J."/>
            <person name="Town C.D."/>
            <person name="Utterback T."/>
            <person name="Van Aken S."/>
            <person name="Vaysberg M."/>
            <person name="Vysotskaia V.S."/>
            <person name="Walker M."/>
            <person name="Wu D."/>
            <person name="Yu G."/>
            <person name="Fraser C.M."/>
            <person name="Venter J.C."/>
            <person name="Davis R.W."/>
        </authorList>
    </citation>
    <scope>NUCLEOTIDE SEQUENCE [LARGE SCALE GENOMIC DNA]</scope>
    <source>
        <strain>cv. Columbia</strain>
    </source>
</reference>
<reference key="2">
    <citation type="journal article" date="2017" name="Plant J.">
        <title>Araport11: a complete reannotation of the Arabidopsis thaliana reference genome.</title>
        <authorList>
            <person name="Cheng C.Y."/>
            <person name="Krishnakumar V."/>
            <person name="Chan A.P."/>
            <person name="Thibaud-Nissen F."/>
            <person name="Schobel S."/>
            <person name="Town C.D."/>
        </authorList>
    </citation>
    <scope>GENOME REANNOTATION</scope>
    <source>
        <strain>cv. Columbia</strain>
    </source>
</reference>
<reference key="3">
    <citation type="submission" date="2006-07" db="EMBL/GenBank/DDBJ databases">
        <title>Large-scale analysis of RIKEN Arabidopsis full-length (RAFL) cDNAs.</title>
        <authorList>
            <person name="Totoki Y."/>
            <person name="Seki M."/>
            <person name="Ishida J."/>
            <person name="Nakajima M."/>
            <person name="Enju A."/>
            <person name="Kamiya A."/>
            <person name="Narusaka M."/>
            <person name="Shin-i T."/>
            <person name="Nakagawa M."/>
            <person name="Sakamoto N."/>
            <person name="Oishi K."/>
            <person name="Kohara Y."/>
            <person name="Kobayashi M."/>
            <person name="Toyoda A."/>
            <person name="Sakaki Y."/>
            <person name="Sakurai T."/>
            <person name="Iida K."/>
            <person name="Akiyama K."/>
            <person name="Satou M."/>
            <person name="Toyoda T."/>
            <person name="Konagaya A."/>
            <person name="Carninci P."/>
            <person name="Kawai J."/>
            <person name="Hayashizaki Y."/>
            <person name="Shinozaki K."/>
        </authorList>
    </citation>
    <scope>NUCLEOTIDE SEQUENCE [LARGE SCALE MRNA] OF 1-727</scope>
    <source>
        <strain>cv. Columbia</strain>
    </source>
</reference>
<reference key="4">
    <citation type="journal article" date="2004" name="Plant Cell">
        <title>Genome-wide analysis of Arabidopsis pentatricopeptide repeat proteins reveals their essential role in organelle biogenesis.</title>
        <authorList>
            <person name="Lurin C."/>
            <person name="Andres C."/>
            <person name="Aubourg S."/>
            <person name="Bellaoui M."/>
            <person name="Bitton F."/>
            <person name="Bruyere C."/>
            <person name="Caboche M."/>
            <person name="Debast C."/>
            <person name="Gualberto J."/>
            <person name="Hoffmann B."/>
            <person name="Lecharny A."/>
            <person name="Le Ret M."/>
            <person name="Martin-Magniette M.-L."/>
            <person name="Mireau H."/>
            <person name="Peeters N."/>
            <person name="Renou J.-P."/>
            <person name="Szurek B."/>
            <person name="Taconnat L."/>
            <person name="Small I."/>
        </authorList>
    </citation>
    <scope>GENE FAMILY</scope>
</reference>
<proteinExistence type="evidence at transcript level"/>
<keyword id="KW-1185">Reference proteome</keyword>
<keyword id="KW-0677">Repeat</keyword>
<protein>
    <recommendedName>
        <fullName>Pentatricopeptide repeat-containing protein At1g71420</fullName>
    </recommendedName>
</protein>
<name>PP114_ARATH</name>
<accession>Q9C9H9</accession>
<accession>Q0WL09</accession>
<gene>
    <name type="primary">PCMP-H70</name>
    <name type="ordered locus">At1g71420</name>
    <name type="ORF">F26A9.20</name>
</gene>